<comment type="catalytic activity">
    <reaction evidence="1">
        <text>tRNA(Arg) + L-arginine + ATP = L-arginyl-tRNA(Arg) + AMP + diphosphate</text>
        <dbReference type="Rhea" id="RHEA:20301"/>
        <dbReference type="Rhea" id="RHEA-COMP:9658"/>
        <dbReference type="Rhea" id="RHEA-COMP:9673"/>
        <dbReference type="ChEBI" id="CHEBI:30616"/>
        <dbReference type="ChEBI" id="CHEBI:32682"/>
        <dbReference type="ChEBI" id="CHEBI:33019"/>
        <dbReference type="ChEBI" id="CHEBI:78442"/>
        <dbReference type="ChEBI" id="CHEBI:78513"/>
        <dbReference type="ChEBI" id="CHEBI:456215"/>
        <dbReference type="EC" id="6.1.1.19"/>
    </reaction>
</comment>
<comment type="subcellular location">
    <subcellularLocation>
        <location evidence="1">Cytoplasm</location>
    </subcellularLocation>
</comment>
<comment type="similarity">
    <text evidence="1">Belongs to the class-I aminoacyl-tRNA synthetase family.</text>
</comment>
<organism>
    <name type="scientific">Ignicoccus hospitalis (strain KIN4/I / DSM 18386 / JCM 14125)</name>
    <dbReference type="NCBI Taxonomy" id="453591"/>
    <lineage>
        <taxon>Archaea</taxon>
        <taxon>Thermoproteota</taxon>
        <taxon>Thermoprotei</taxon>
        <taxon>Desulfurococcales</taxon>
        <taxon>Desulfurococcaceae</taxon>
        <taxon>Ignicoccus</taxon>
    </lineage>
</organism>
<feature type="chain" id="PRO_1000018044" description="Arginine--tRNA ligase">
    <location>
        <begin position="1"/>
        <end position="622"/>
    </location>
</feature>
<feature type="short sequence motif" description="'HIGH' region">
    <location>
        <begin position="127"/>
        <end position="137"/>
    </location>
</feature>
<sequence length="622" mass="71225">MYVLSETKSNFLKLIAEALKRRGLEVEEEELERLAGRPPSPEMGDLGVSLFRYAKKLGLRPEELTSELKGEIEGRLAGVKEVKAIGGFLNVELEPSWLAERALREASREDYGKWSFSGRLVVEHTSANPVHPLHVGHARNMFLGDSLVRILKNWGADVQSRFYINDMGRQVAVLVYGLLKLGRLEPPEGEKPDHWYGKVYSVANALVELNSPSKGDDEKKEWEEVLKELESKWPEIVREMKEKFDDEDPEAKVSELMKKYEEGDPEVKETFRKVVNEVLKGFKETMERVGVNVDKWDWESDLVWSGEVDKIINMAKEKGLVIEKDGALVMVFKNLNDEVRRRLRIPKGLQIPPLVLKRSDGTTLYTTRDIAYTIKKFEEFRADRVINVIAAEQRLPQIQLRLALWELGFKEYAENLIHYAYEMVNVPGMKMSGRRGRMITLDWLLDEAERRVRELVEGRSEAEDVDEVVKKVAVGAVKFAMVSVSPEKPITFKWEEVLNFERNSAPYLQYTYARAVGILRKGGEPDLERADYSKAEKYKDMILSIAEFPEVARKAAEDLKPDLIATYLLSLADKFNEFYHKEPVAKEPDEGLRNLKLALVKAVANTIRRGLWLLGVEAPARM</sequence>
<accession>A8AB06</accession>
<gene>
    <name evidence="1" type="primary">argS</name>
    <name type="ordered locus">Igni_0928</name>
</gene>
<reference key="1">
    <citation type="journal article" date="2008" name="Genome Biol.">
        <title>A genomic analysis of the archaeal system Ignicoccus hospitalis-Nanoarchaeum equitans.</title>
        <authorList>
            <person name="Podar M."/>
            <person name="Anderson I."/>
            <person name="Makarova K.S."/>
            <person name="Elkins J.G."/>
            <person name="Ivanova N."/>
            <person name="Wall M.A."/>
            <person name="Lykidis A."/>
            <person name="Mavromatis K."/>
            <person name="Sun H."/>
            <person name="Hudson M.E."/>
            <person name="Chen W."/>
            <person name="Deciu C."/>
            <person name="Hutchison D."/>
            <person name="Eads J.R."/>
            <person name="Anderson A."/>
            <person name="Fernandes F."/>
            <person name="Szeto E."/>
            <person name="Lapidus A."/>
            <person name="Kyrpides N.C."/>
            <person name="Saier M.H. Jr."/>
            <person name="Richardson P.M."/>
            <person name="Rachel R."/>
            <person name="Huber H."/>
            <person name="Eisen J.A."/>
            <person name="Koonin E.V."/>
            <person name="Keller M."/>
            <person name="Stetter K.O."/>
        </authorList>
    </citation>
    <scope>NUCLEOTIDE SEQUENCE [LARGE SCALE GENOMIC DNA]</scope>
    <source>
        <strain>KIN4/I / DSM 18386 / JCM 14125</strain>
    </source>
</reference>
<proteinExistence type="inferred from homology"/>
<evidence type="ECO:0000255" key="1">
    <source>
        <dbReference type="HAMAP-Rule" id="MF_00123"/>
    </source>
</evidence>
<name>SYR_IGNH4</name>
<protein>
    <recommendedName>
        <fullName evidence="1">Arginine--tRNA ligase</fullName>
        <ecNumber evidence="1">6.1.1.19</ecNumber>
    </recommendedName>
    <alternativeName>
        <fullName evidence="1">Arginyl-tRNA synthetase</fullName>
        <shortName evidence="1">ArgRS</shortName>
    </alternativeName>
</protein>
<keyword id="KW-0030">Aminoacyl-tRNA synthetase</keyword>
<keyword id="KW-0067">ATP-binding</keyword>
<keyword id="KW-0963">Cytoplasm</keyword>
<keyword id="KW-0436">Ligase</keyword>
<keyword id="KW-0547">Nucleotide-binding</keyword>
<keyword id="KW-0648">Protein biosynthesis</keyword>
<keyword id="KW-1185">Reference proteome</keyword>
<dbReference type="EC" id="6.1.1.19" evidence="1"/>
<dbReference type="EMBL" id="CP000816">
    <property type="protein sequence ID" value="ABU82108.1"/>
    <property type="molecule type" value="Genomic_DNA"/>
</dbReference>
<dbReference type="RefSeq" id="WP_012123072.1">
    <property type="nucleotide sequence ID" value="NC_009776.1"/>
</dbReference>
<dbReference type="SMR" id="A8AB06"/>
<dbReference type="STRING" id="453591.Igni_0928"/>
<dbReference type="GeneID" id="5562493"/>
<dbReference type="KEGG" id="iho:Igni_0928"/>
<dbReference type="eggNOG" id="arCOG00487">
    <property type="taxonomic scope" value="Archaea"/>
</dbReference>
<dbReference type="HOGENOM" id="CLU_006406_6_1_2"/>
<dbReference type="OrthoDB" id="372102at2157"/>
<dbReference type="PhylomeDB" id="A8AB06"/>
<dbReference type="Proteomes" id="UP000000262">
    <property type="component" value="Chromosome"/>
</dbReference>
<dbReference type="GO" id="GO:0005737">
    <property type="term" value="C:cytoplasm"/>
    <property type="evidence" value="ECO:0007669"/>
    <property type="project" value="UniProtKB-SubCell"/>
</dbReference>
<dbReference type="GO" id="GO:0004814">
    <property type="term" value="F:arginine-tRNA ligase activity"/>
    <property type="evidence" value="ECO:0007669"/>
    <property type="project" value="UniProtKB-UniRule"/>
</dbReference>
<dbReference type="GO" id="GO:0005524">
    <property type="term" value="F:ATP binding"/>
    <property type="evidence" value="ECO:0007669"/>
    <property type="project" value="UniProtKB-UniRule"/>
</dbReference>
<dbReference type="GO" id="GO:0006420">
    <property type="term" value="P:arginyl-tRNA aminoacylation"/>
    <property type="evidence" value="ECO:0007669"/>
    <property type="project" value="UniProtKB-UniRule"/>
</dbReference>
<dbReference type="CDD" id="cd07956">
    <property type="entry name" value="Anticodon_Ia_Arg"/>
    <property type="match status" value="1"/>
</dbReference>
<dbReference type="CDD" id="cd00671">
    <property type="entry name" value="ArgRS_core"/>
    <property type="match status" value="1"/>
</dbReference>
<dbReference type="Gene3D" id="3.30.1360.70">
    <property type="entry name" value="Arginyl tRNA synthetase N-terminal domain"/>
    <property type="match status" value="1"/>
</dbReference>
<dbReference type="Gene3D" id="3.40.50.620">
    <property type="entry name" value="HUPs"/>
    <property type="match status" value="1"/>
</dbReference>
<dbReference type="Gene3D" id="1.10.730.10">
    <property type="entry name" value="Isoleucyl-tRNA Synthetase, Domain 1"/>
    <property type="match status" value="1"/>
</dbReference>
<dbReference type="HAMAP" id="MF_00123">
    <property type="entry name" value="Arg_tRNA_synth"/>
    <property type="match status" value="1"/>
</dbReference>
<dbReference type="InterPro" id="IPR001278">
    <property type="entry name" value="Arg-tRNA-ligase"/>
</dbReference>
<dbReference type="InterPro" id="IPR005148">
    <property type="entry name" value="Arg-tRNA-synth_N"/>
</dbReference>
<dbReference type="InterPro" id="IPR036695">
    <property type="entry name" value="Arg-tRNA-synth_N_sf"/>
</dbReference>
<dbReference type="InterPro" id="IPR035684">
    <property type="entry name" value="ArgRS_core"/>
</dbReference>
<dbReference type="InterPro" id="IPR008909">
    <property type="entry name" value="DALR_anticod-bd"/>
</dbReference>
<dbReference type="InterPro" id="IPR014729">
    <property type="entry name" value="Rossmann-like_a/b/a_fold"/>
</dbReference>
<dbReference type="InterPro" id="IPR009080">
    <property type="entry name" value="tRNAsynth_Ia_anticodon-bd"/>
</dbReference>
<dbReference type="NCBIfam" id="TIGR00456">
    <property type="entry name" value="argS"/>
    <property type="match status" value="1"/>
</dbReference>
<dbReference type="NCBIfam" id="NF002446">
    <property type="entry name" value="PRK01611.3-3"/>
    <property type="match status" value="1"/>
</dbReference>
<dbReference type="PANTHER" id="PTHR11956:SF5">
    <property type="entry name" value="ARGININE--TRNA LIGASE, CYTOPLASMIC"/>
    <property type="match status" value="1"/>
</dbReference>
<dbReference type="PANTHER" id="PTHR11956">
    <property type="entry name" value="ARGINYL-TRNA SYNTHETASE"/>
    <property type="match status" value="1"/>
</dbReference>
<dbReference type="Pfam" id="PF03485">
    <property type="entry name" value="Arg_tRNA_synt_N"/>
    <property type="match status" value="1"/>
</dbReference>
<dbReference type="Pfam" id="PF05746">
    <property type="entry name" value="DALR_1"/>
    <property type="match status" value="1"/>
</dbReference>
<dbReference type="Pfam" id="PF00750">
    <property type="entry name" value="tRNA-synt_1d"/>
    <property type="match status" value="2"/>
</dbReference>
<dbReference type="PRINTS" id="PR01038">
    <property type="entry name" value="TRNASYNTHARG"/>
</dbReference>
<dbReference type="SMART" id="SM01016">
    <property type="entry name" value="Arg_tRNA_synt_N"/>
    <property type="match status" value="1"/>
</dbReference>
<dbReference type="SMART" id="SM00836">
    <property type="entry name" value="DALR_1"/>
    <property type="match status" value="1"/>
</dbReference>
<dbReference type="SUPFAM" id="SSF47323">
    <property type="entry name" value="Anticodon-binding domain of a subclass of class I aminoacyl-tRNA synthetases"/>
    <property type="match status" value="1"/>
</dbReference>
<dbReference type="SUPFAM" id="SSF55190">
    <property type="entry name" value="Arginyl-tRNA synthetase (ArgRS), N-terminal 'additional' domain"/>
    <property type="match status" value="1"/>
</dbReference>
<dbReference type="SUPFAM" id="SSF52374">
    <property type="entry name" value="Nucleotidylyl transferase"/>
    <property type="match status" value="1"/>
</dbReference>